<protein>
    <recommendedName>
        <fullName evidence="1">HTH-type transcriptional regulator MntR</fullName>
    </recommendedName>
    <alternativeName>
        <fullName evidence="1">Manganese transport regulator</fullName>
    </alternativeName>
</protein>
<sequence length="142" mass="16596">MPTPSMEDYIEQIYLLIDEKGYARVSDIAEALSVHPSSVTKMVQKLDKDEYLIYEKYRGLVLTSKGKKIGERLVYRHELLEQFMRIIGVDESKIYNDVEGIEHHLSWEAIDRIGDLVQYFEQDEVRVETLRGVQKANEEKSN</sequence>
<reference key="1">
    <citation type="submission" date="2008-10" db="EMBL/GenBank/DDBJ databases">
        <title>Genome sequence of Bacillus cereus AH820.</title>
        <authorList>
            <person name="Dodson R.J."/>
            <person name="Durkin A.S."/>
            <person name="Rosovitz M.J."/>
            <person name="Rasko D.A."/>
            <person name="Hoffmaster A."/>
            <person name="Ravel J."/>
            <person name="Sutton G."/>
        </authorList>
    </citation>
    <scope>NUCLEOTIDE SEQUENCE [LARGE SCALE GENOMIC DNA]</scope>
    <source>
        <strain>AH820</strain>
    </source>
</reference>
<proteinExistence type="inferred from homology"/>
<dbReference type="EMBL" id="CP001283">
    <property type="protein sequence ID" value="ACK89554.1"/>
    <property type="molecule type" value="Genomic_DNA"/>
</dbReference>
<dbReference type="RefSeq" id="WP_001143076.1">
    <property type="nucleotide sequence ID" value="NC_011773.1"/>
</dbReference>
<dbReference type="SMR" id="B7JMS8"/>
<dbReference type="GeneID" id="75087347"/>
<dbReference type="KEGG" id="bcu:BCAH820_4224"/>
<dbReference type="HOGENOM" id="CLU_069532_3_0_9"/>
<dbReference type="Proteomes" id="UP000001363">
    <property type="component" value="Chromosome"/>
</dbReference>
<dbReference type="GO" id="GO:0005737">
    <property type="term" value="C:cytoplasm"/>
    <property type="evidence" value="ECO:0007669"/>
    <property type="project" value="UniProtKB-SubCell"/>
</dbReference>
<dbReference type="GO" id="GO:0003677">
    <property type="term" value="F:DNA binding"/>
    <property type="evidence" value="ECO:0007669"/>
    <property type="project" value="UniProtKB-KW"/>
</dbReference>
<dbReference type="GO" id="GO:0003700">
    <property type="term" value="F:DNA-binding transcription factor activity"/>
    <property type="evidence" value="ECO:0007669"/>
    <property type="project" value="UniProtKB-UniRule"/>
</dbReference>
<dbReference type="GO" id="GO:0030145">
    <property type="term" value="F:manganese ion binding"/>
    <property type="evidence" value="ECO:0007669"/>
    <property type="project" value="UniProtKB-UniRule"/>
</dbReference>
<dbReference type="GO" id="GO:0046983">
    <property type="term" value="F:protein dimerization activity"/>
    <property type="evidence" value="ECO:0007669"/>
    <property type="project" value="InterPro"/>
</dbReference>
<dbReference type="GO" id="GO:0030026">
    <property type="term" value="P:intracellular manganese ion homeostasis"/>
    <property type="evidence" value="ECO:0007669"/>
    <property type="project" value="UniProtKB-UniRule"/>
</dbReference>
<dbReference type="FunFam" id="1.10.10.10:FF:000189">
    <property type="entry name" value="HTH-type transcriptional regulator MntR"/>
    <property type="match status" value="1"/>
</dbReference>
<dbReference type="FunFam" id="1.10.60.10:FF:000003">
    <property type="entry name" value="HTH-type transcriptional regulator MntR"/>
    <property type="match status" value="1"/>
</dbReference>
<dbReference type="Gene3D" id="1.10.60.10">
    <property type="entry name" value="Iron dependent repressor, metal binding and dimerisation domain"/>
    <property type="match status" value="1"/>
</dbReference>
<dbReference type="Gene3D" id="1.10.10.10">
    <property type="entry name" value="Winged helix-like DNA-binding domain superfamily/Winged helix DNA-binding domain"/>
    <property type="match status" value="1"/>
</dbReference>
<dbReference type="HAMAP" id="MF_00732">
    <property type="entry name" value="HTH_MntR"/>
    <property type="match status" value="1"/>
</dbReference>
<dbReference type="InterPro" id="IPR050536">
    <property type="entry name" value="DtxR_MntR_Metal-Reg"/>
</dbReference>
<dbReference type="InterPro" id="IPR001367">
    <property type="entry name" value="Fe_dep_repressor"/>
</dbReference>
<dbReference type="InterPro" id="IPR036421">
    <property type="entry name" value="Fe_dep_repressor_sf"/>
</dbReference>
<dbReference type="InterPro" id="IPR022687">
    <property type="entry name" value="HTH_DTXR"/>
</dbReference>
<dbReference type="InterPro" id="IPR022897">
    <property type="entry name" value="HTH_tscrpt_reg_MntR"/>
</dbReference>
<dbReference type="InterPro" id="IPR022689">
    <property type="entry name" value="Iron_dep_repressor"/>
</dbReference>
<dbReference type="InterPro" id="IPR036388">
    <property type="entry name" value="WH-like_DNA-bd_sf"/>
</dbReference>
<dbReference type="InterPro" id="IPR036390">
    <property type="entry name" value="WH_DNA-bd_sf"/>
</dbReference>
<dbReference type="NCBIfam" id="NF003025">
    <property type="entry name" value="PRK03902.1"/>
    <property type="match status" value="1"/>
</dbReference>
<dbReference type="PANTHER" id="PTHR33238">
    <property type="entry name" value="IRON (METAL) DEPENDENT REPRESSOR, DTXR FAMILY"/>
    <property type="match status" value="1"/>
</dbReference>
<dbReference type="PANTHER" id="PTHR33238:SF11">
    <property type="entry name" value="TRANSCRIPTIONAL REGULATOR MNTR"/>
    <property type="match status" value="1"/>
</dbReference>
<dbReference type="Pfam" id="PF02742">
    <property type="entry name" value="Fe_dep_repr_C"/>
    <property type="match status" value="1"/>
</dbReference>
<dbReference type="Pfam" id="PF01325">
    <property type="entry name" value="Fe_dep_repress"/>
    <property type="match status" value="1"/>
</dbReference>
<dbReference type="SMART" id="SM00529">
    <property type="entry name" value="HTH_DTXR"/>
    <property type="match status" value="1"/>
</dbReference>
<dbReference type="SUPFAM" id="SSF47979">
    <property type="entry name" value="Iron-dependent repressor protein, dimerization domain"/>
    <property type="match status" value="1"/>
</dbReference>
<dbReference type="SUPFAM" id="SSF46785">
    <property type="entry name" value="Winged helix' DNA-binding domain"/>
    <property type="match status" value="1"/>
</dbReference>
<dbReference type="PROSITE" id="PS50944">
    <property type="entry name" value="HTH_DTXR"/>
    <property type="match status" value="1"/>
</dbReference>
<name>MNTR_BACC0</name>
<evidence type="ECO:0000255" key="1">
    <source>
        <dbReference type="HAMAP-Rule" id="MF_00732"/>
    </source>
</evidence>
<gene>
    <name evidence="1" type="primary">mntR</name>
    <name type="ordered locus">BCAH820_4224</name>
</gene>
<comment type="function">
    <text evidence="1">Central regulator of manganese homeostasis.</text>
</comment>
<comment type="activity regulation">
    <text evidence="1">DNA binding is strongly activated by Mn(2+).</text>
</comment>
<comment type="subunit">
    <text evidence="1">Homodimer.</text>
</comment>
<comment type="subcellular location">
    <subcellularLocation>
        <location evidence="1">Cytoplasm</location>
    </subcellularLocation>
</comment>
<comment type="similarity">
    <text evidence="1">Belongs to the DtxR/MntR family.</text>
</comment>
<feature type="chain" id="PRO_1000132742" description="HTH-type transcriptional regulator MntR">
    <location>
        <begin position="1"/>
        <end position="142"/>
    </location>
</feature>
<feature type="domain" description="HTH dtxR-type" evidence="1">
    <location>
        <begin position="1"/>
        <end position="63"/>
    </location>
</feature>
<feature type="binding site" evidence="1">
    <location>
        <position position="8"/>
    </location>
    <ligand>
        <name>Mn(2+)</name>
        <dbReference type="ChEBI" id="CHEBI:29035"/>
        <label>1</label>
    </ligand>
</feature>
<feature type="binding site" evidence="1">
    <location>
        <position position="11"/>
    </location>
    <ligand>
        <name>Mn(2+)</name>
        <dbReference type="ChEBI" id="CHEBI:29035"/>
        <label>2</label>
    </ligand>
</feature>
<feature type="binding site" evidence="1">
    <location>
        <position position="77"/>
    </location>
    <ligand>
        <name>Mn(2+)</name>
        <dbReference type="ChEBI" id="CHEBI:29035"/>
        <label>2</label>
    </ligand>
</feature>
<feature type="binding site" evidence="1">
    <location>
        <position position="99"/>
    </location>
    <ligand>
        <name>Mn(2+)</name>
        <dbReference type="ChEBI" id="CHEBI:29035"/>
        <label>1</label>
    </ligand>
</feature>
<feature type="binding site" evidence="1">
    <location>
        <position position="99"/>
    </location>
    <ligand>
        <name>Mn(2+)</name>
        <dbReference type="ChEBI" id="CHEBI:29035"/>
        <label>2</label>
    </ligand>
</feature>
<feature type="binding site" evidence="1">
    <location>
        <position position="102"/>
    </location>
    <ligand>
        <name>Mn(2+)</name>
        <dbReference type="ChEBI" id="CHEBI:29035"/>
        <label>1</label>
    </ligand>
</feature>
<feature type="binding site" evidence="1">
    <location>
        <position position="102"/>
    </location>
    <ligand>
        <name>Mn(2+)</name>
        <dbReference type="ChEBI" id="CHEBI:29035"/>
        <label>2</label>
    </ligand>
</feature>
<feature type="binding site" evidence="1">
    <location>
        <position position="103"/>
    </location>
    <ligand>
        <name>Mn(2+)</name>
        <dbReference type="ChEBI" id="CHEBI:29035"/>
        <label>1</label>
    </ligand>
</feature>
<keyword id="KW-0010">Activator</keyword>
<keyword id="KW-0963">Cytoplasm</keyword>
<keyword id="KW-0238">DNA-binding</keyword>
<keyword id="KW-0464">Manganese</keyword>
<keyword id="KW-0479">Metal-binding</keyword>
<keyword id="KW-0678">Repressor</keyword>
<keyword id="KW-0804">Transcription</keyword>
<keyword id="KW-0805">Transcription regulation</keyword>
<accession>B7JMS8</accession>
<organism>
    <name type="scientific">Bacillus cereus (strain AH820)</name>
    <dbReference type="NCBI Taxonomy" id="405535"/>
    <lineage>
        <taxon>Bacteria</taxon>
        <taxon>Bacillati</taxon>
        <taxon>Bacillota</taxon>
        <taxon>Bacilli</taxon>
        <taxon>Bacillales</taxon>
        <taxon>Bacillaceae</taxon>
        <taxon>Bacillus</taxon>
        <taxon>Bacillus cereus group</taxon>
    </lineage>
</organism>